<gene>
    <name evidence="1" type="primary">truD</name>
    <name type="ordered locus">ECDH10B_2913</name>
</gene>
<accession>B1XCS1</accession>
<organism>
    <name type="scientific">Escherichia coli (strain K12 / DH10B)</name>
    <dbReference type="NCBI Taxonomy" id="316385"/>
    <lineage>
        <taxon>Bacteria</taxon>
        <taxon>Pseudomonadati</taxon>
        <taxon>Pseudomonadota</taxon>
        <taxon>Gammaproteobacteria</taxon>
        <taxon>Enterobacterales</taxon>
        <taxon>Enterobacteriaceae</taxon>
        <taxon>Escherichia</taxon>
    </lineage>
</organism>
<reference key="1">
    <citation type="journal article" date="2008" name="J. Bacteriol.">
        <title>The complete genome sequence of Escherichia coli DH10B: insights into the biology of a laboratory workhorse.</title>
        <authorList>
            <person name="Durfee T."/>
            <person name="Nelson R."/>
            <person name="Baldwin S."/>
            <person name="Plunkett G. III"/>
            <person name="Burland V."/>
            <person name="Mau B."/>
            <person name="Petrosino J.F."/>
            <person name="Qin X."/>
            <person name="Muzny D.M."/>
            <person name="Ayele M."/>
            <person name="Gibbs R.A."/>
            <person name="Csorgo B."/>
            <person name="Posfai G."/>
            <person name="Weinstock G.M."/>
            <person name="Blattner F.R."/>
        </authorList>
    </citation>
    <scope>NUCLEOTIDE SEQUENCE [LARGE SCALE GENOMIC DNA]</scope>
    <source>
        <strain>K12 / DH10B</strain>
    </source>
</reference>
<protein>
    <recommendedName>
        <fullName evidence="1">tRNA pseudouridine synthase D</fullName>
        <ecNumber evidence="1">5.4.99.27</ecNumber>
    </recommendedName>
    <alternativeName>
        <fullName evidence="1">tRNA pseudouridine(13) synthase</fullName>
    </alternativeName>
    <alternativeName>
        <fullName evidence="1">tRNA pseudouridylate synthase D</fullName>
    </alternativeName>
    <alternativeName>
        <fullName evidence="1">tRNA-uridine isomerase D</fullName>
    </alternativeName>
</protein>
<evidence type="ECO:0000255" key="1">
    <source>
        <dbReference type="HAMAP-Rule" id="MF_01082"/>
    </source>
</evidence>
<proteinExistence type="inferred from homology"/>
<name>TRUD_ECODH</name>
<keyword id="KW-0413">Isomerase</keyword>
<keyword id="KW-0819">tRNA processing</keyword>
<feature type="chain" id="PRO_1000136833" description="tRNA pseudouridine synthase D">
    <location>
        <begin position="1"/>
        <end position="349"/>
    </location>
</feature>
<feature type="domain" description="TRUD" evidence="1">
    <location>
        <begin position="155"/>
        <end position="303"/>
    </location>
</feature>
<feature type="active site" description="Nucleophile" evidence="1">
    <location>
        <position position="80"/>
    </location>
</feature>
<feature type="binding site" evidence="1">
    <location>
        <position position="27"/>
    </location>
    <ligand>
        <name>substrate</name>
    </ligand>
</feature>
<feature type="binding site" evidence="1">
    <location>
        <position position="129"/>
    </location>
    <ligand>
        <name>substrate</name>
    </ligand>
</feature>
<feature type="binding site" evidence="1">
    <location>
        <position position="329"/>
    </location>
    <ligand>
        <name>substrate</name>
    </ligand>
</feature>
<comment type="function">
    <text evidence="1">Responsible for synthesis of pseudouridine from uracil-13 in transfer RNAs.</text>
</comment>
<comment type="catalytic activity">
    <reaction evidence="1">
        <text>uridine(13) in tRNA = pseudouridine(13) in tRNA</text>
        <dbReference type="Rhea" id="RHEA:42540"/>
        <dbReference type="Rhea" id="RHEA-COMP:10105"/>
        <dbReference type="Rhea" id="RHEA-COMP:10106"/>
        <dbReference type="ChEBI" id="CHEBI:65314"/>
        <dbReference type="ChEBI" id="CHEBI:65315"/>
        <dbReference type="EC" id="5.4.99.27"/>
    </reaction>
</comment>
<comment type="similarity">
    <text evidence="1">Belongs to the pseudouridine synthase TruD family.</text>
</comment>
<dbReference type="EC" id="5.4.99.27" evidence="1"/>
<dbReference type="EMBL" id="CP000948">
    <property type="protein sequence ID" value="ACB03862.1"/>
    <property type="molecule type" value="Genomic_DNA"/>
</dbReference>
<dbReference type="RefSeq" id="WP_000568943.1">
    <property type="nucleotide sequence ID" value="NC_010473.1"/>
</dbReference>
<dbReference type="SMR" id="B1XCS1"/>
<dbReference type="GeneID" id="75205606"/>
<dbReference type="KEGG" id="ecd:ECDH10B_2913"/>
<dbReference type="HOGENOM" id="CLU_005281_4_0_6"/>
<dbReference type="GO" id="GO:0005829">
    <property type="term" value="C:cytosol"/>
    <property type="evidence" value="ECO:0007669"/>
    <property type="project" value="TreeGrafter"/>
</dbReference>
<dbReference type="GO" id="GO:0003723">
    <property type="term" value="F:RNA binding"/>
    <property type="evidence" value="ECO:0007669"/>
    <property type="project" value="InterPro"/>
</dbReference>
<dbReference type="GO" id="GO:0160150">
    <property type="term" value="F:tRNA pseudouridine(13) synthase activity"/>
    <property type="evidence" value="ECO:0007669"/>
    <property type="project" value="UniProtKB-EC"/>
</dbReference>
<dbReference type="GO" id="GO:0031119">
    <property type="term" value="P:tRNA pseudouridine synthesis"/>
    <property type="evidence" value="ECO:0007669"/>
    <property type="project" value="UniProtKB-UniRule"/>
</dbReference>
<dbReference type="CDD" id="cd02575">
    <property type="entry name" value="PseudoU_synth_EcTruD"/>
    <property type="match status" value="1"/>
</dbReference>
<dbReference type="FunFam" id="3.30.2340.10:FF:000001">
    <property type="entry name" value="tRNA pseudouridine synthase D"/>
    <property type="match status" value="1"/>
</dbReference>
<dbReference type="FunFam" id="3.30.2350.20:FF:000001">
    <property type="entry name" value="tRNA pseudouridine synthase D"/>
    <property type="match status" value="1"/>
</dbReference>
<dbReference type="Gene3D" id="3.30.2350.20">
    <property type="entry name" value="TruD, catalytic domain"/>
    <property type="match status" value="1"/>
</dbReference>
<dbReference type="Gene3D" id="3.30.2340.10">
    <property type="entry name" value="TruD, insertion domain"/>
    <property type="match status" value="1"/>
</dbReference>
<dbReference type="HAMAP" id="MF_01082">
    <property type="entry name" value="TruD"/>
    <property type="match status" value="1"/>
</dbReference>
<dbReference type="InterPro" id="IPR020103">
    <property type="entry name" value="PsdUridine_synth_cat_dom_sf"/>
</dbReference>
<dbReference type="InterPro" id="IPR001656">
    <property type="entry name" value="PsdUridine_synth_TruD"/>
</dbReference>
<dbReference type="InterPro" id="IPR020119">
    <property type="entry name" value="PsdUridine_synth_TruD_CS"/>
</dbReference>
<dbReference type="InterPro" id="IPR011760">
    <property type="entry name" value="PsdUridine_synth_TruD_insert"/>
</dbReference>
<dbReference type="InterPro" id="IPR042214">
    <property type="entry name" value="TruD_catalytic"/>
</dbReference>
<dbReference type="InterPro" id="IPR043165">
    <property type="entry name" value="TruD_insert_sf"/>
</dbReference>
<dbReference type="InterPro" id="IPR050170">
    <property type="entry name" value="TruD_pseudoU_synthase"/>
</dbReference>
<dbReference type="NCBIfam" id="NF002155">
    <property type="entry name" value="PRK00984.1-4"/>
    <property type="match status" value="1"/>
</dbReference>
<dbReference type="NCBIfam" id="TIGR00094">
    <property type="entry name" value="tRNA_TruD_broad"/>
    <property type="match status" value="1"/>
</dbReference>
<dbReference type="PANTHER" id="PTHR47811">
    <property type="entry name" value="TRNA PSEUDOURIDINE SYNTHASE D"/>
    <property type="match status" value="1"/>
</dbReference>
<dbReference type="PANTHER" id="PTHR47811:SF1">
    <property type="entry name" value="TRNA PSEUDOURIDINE SYNTHASE D"/>
    <property type="match status" value="1"/>
</dbReference>
<dbReference type="Pfam" id="PF01142">
    <property type="entry name" value="TruD"/>
    <property type="match status" value="2"/>
</dbReference>
<dbReference type="SUPFAM" id="SSF55120">
    <property type="entry name" value="Pseudouridine synthase"/>
    <property type="match status" value="1"/>
</dbReference>
<dbReference type="PROSITE" id="PS50984">
    <property type="entry name" value="TRUD"/>
    <property type="match status" value="1"/>
</dbReference>
<dbReference type="PROSITE" id="PS01268">
    <property type="entry name" value="UPF0024"/>
    <property type="match status" value="1"/>
</dbReference>
<sequence length="349" mass="39091">MIEFDNLTYLHGKPQGTGLLKANPEDFVVVEDLGFEPDGEGEHILVRILKNGCNTRFVADALAKFLKIHAREVSFAGQKDKHAVTEQWLCARVPGKEMPDLSAFQLEGCQVLEYARHKRKLRLGALKGNAFTLVLREVSNRDDVEQRLIDICVKGVPNYFGAQRFGIGGSNLQGAQRWAQTNTPVRDRNKRSFWLSAARSALFNQIVAERLKKADVNQVVDGDALQLAGRGSWFVATTEELAELQRRVNDKELMITAALPGSGEWGTQREALAFEQAAVAAETELQALLVREKVEAARRAMLLYPQQLSWNWWDDVTVEIRFWLPAGSFATSVVRELINTTGDYAHIAE</sequence>